<accession>Q83CW6</accession>
<proteinExistence type="inferred from homology"/>
<evidence type="ECO:0000255" key="1">
    <source>
        <dbReference type="HAMAP-Rule" id="MF_01887"/>
    </source>
</evidence>
<evidence type="ECO:0000305" key="2"/>
<gene>
    <name evidence="1" type="primary">rlmB</name>
    <name type="ordered locus">CBU_0986</name>
</gene>
<reference key="1">
    <citation type="journal article" date="2003" name="Proc. Natl. Acad. Sci. U.S.A.">
        <title>Complete genome sequence of the Q-fever pathogen, Coxiella burnetii.</title>
        <authorList>
            <person name="Seshadri R."/>
            <person name="Paulsen I.T."/>
            <person name="Eisen J.A."/>
            <person name="Read T.D."/>
            <person name="Nelson K.E."/>
            <person name="Nelson W.C."/>
            <person name="Ward N.L."/>
            <person name="Tettelin H."/>
            <person name="Davidsen T.M."/>
            <person name="Beanan M.J."/>
            <person name="DeBoy R.T."/>
            <person name="Daugherty S.C."/>
            <person name="Brinkac L.M."/>
            <person name="Madupu R."/>
            <person name="Dodson R.J."/>
            <person name="Khouri H.M."/>
            <person name="Lee K.H."/>
            <person name="Carty H.A."/>
            <person name="Scanlan D."/>
            <person name="Heinzen R.A."/>
            <person name="Thompson H.A."/>
            <person name="Samuel J.E."/>
            <person name="Fraser C.M."/>
            <person name="Heidelberg J.F."/>
        </authorList>
    </citation>
    <scope>NUCLEOTIDE SEQUENCE [LARGE SCALE GENOMIC DNA]</scope>
    <source>
        <strain>RSA 493 / Nine Mile phase I</strain>
    </source>
</reference>
<organism>
    <name type="scientific">Coxiella burnetii (strain RSA 493 / Nine Mile phase I)</name>
    <dbReference type="NCBI Taxonomy" id="227377"/>
    <lineage>
        <taxon>Bacteria</taxon>
        <taxon>Pseudomonadati</taxon>
        <taxon>Pseudomonadota</taxon>
        <taxon>Gammaproteobacteria</taxon>
        <taxon>Legionellales</taxon>
        <taxon>Coxiellaceae</taxon>
        <taxon>Coxiella</taxon>
    </lineage>
</organism>
<comment type="function">
    <text evidence="1">Specifically methylates the ribose of guanosine 2251 in 23S rRNA.</text>
</comment>
<comment type="catalytic activity">
    <reaction evidence="1">
        <text>guanosine(2251) in 23S rRNA + S-adenosyl-L-methionine = 2'-O-methylguanosine(2251) in 23S rRNA + S-adenosyl-L-homocysteine + H(+)</text>
        <dbReference type="Rhea" id="RHEA:24140"/>
        <dbReference type="Rhea" id="RHEA-COMP:10239"/>
        <dbReference type="Rhea" id="RHEA-COMP:10241"/>
        <dbReference type="ChEBI" id="CHEBI:15378"/>
        <dbReference type="ChEBI" id="CHEBI:57856"/>
        <dbReference type="ChEBI" id="CHEBI:59789"/>
        <dbReference type="ChEBI" id="CHEBI:74269"/>
        <dbReference type="ChEBI" id="CHEBI:74445"/>
        <dbReference type="EC" id="2.1.1.185"/>
    </reaction>
</comment>
<comment type="subcellular location">
    <subcellularLocation>
        <location evidence="1">Cytoplasm</location>
    </subcellularLocation>
</comment>
<comment type="similarity">
    <text evidence="1">Belongs to the class IV-like SAM-binding methyltransferase superfamily. RNA methyltransferase TrmH family. RlmB subfamily.</text>
</comment>
<comment type="sequence caution" evidence="2">
    <conflict type="erroneous initiation">
        <sequence resource="EMBL-CDS" id="AAO90507"/>
    </conflict>
</comment>
<feature type="chain" id="PRO_0000159784" description="23S rRNA (guanosine-2'-O-)-methyltransferase RlmB">
    <location>
        <begin position="1"/>
        <end position="250"/>
    </location>
</feature>
<feature type="binding site" evidence="1">
    <location>
        <position position="198"/>
    </location>
    <ligand>
        <name>S-adenosyl-L-methionine</name>
        <dbReference type="ChEBI" id="CHEBI:59789"/>
    </ligand>
</feature>
<feature type="binding site" evidence="1">
    <location>
        <position position="218"/>
    </location>
    <ligand>
        <name>S-adenosyl-L-methionine</name>
        <dbReference type="ChEBI" id="CHEBI:59789"/>
    </ligand>
</feature>
<feature type="binding site" evidence="1">
    <location>
        <position position="227"/>
    </location>
    <ligand>
        <name>S-adenosyl-L-methionine</name>
        <dbReference type="ChEBI" id="CHEBI:59789"/>
    </ligand>
</feature>
<sequence length="250" mass="27140">MSKIKSIYGIHAVSGVLDAAPQRIVKLYVQENRDDQRLQSLVEKAKALGVKVILLSRTELNTLSNEKHQGIVADCEEVENLDESALLSLLKKRETPALLLILDGVKDPHNLGACLRSANAFGVRAVIAPKDRAVGVTPVVRKVACGAAEMTPFIRVTNLSRTIDWLQKEGVWIVGTAVEAETLIQEIDLTGDIAIVLGSEGAGLRRLTKERCDFLAQIPLRGSVESLNVSVACGICLYEVQRQREAPAPS</sequence>
<name>RLMB_COXBU</name>
<dbReference type="EC" id="2.1.1.185" evidence="1"/>
<dbReference type="EMBL" id="AE016828">
    <property type="protein sequence ID" value="AAO90507.2"/>
    <property type="status" value="ALT_INIT"/>
    <property type="molecule type" value="Genomic_DNA"/>
</dbReference>
<dbReference type="RefSeq" id="NP_819993.2">
    <property type="nucleotide sequence ID" value="NC_002971.3"/>
</dbReference>
<dbReference type="RefSeq" id="WP_010957936.1">
    <property type="nucleotide sequence ID" value="NC_002971.4"/>
</dbReference>
<dbReference type="SMR" id="Q83CW6"/>
<dbReference type="STRING" id="227377.CBU_0986"/>
<dbReference type="EnsemblBacteria" id="AAO90507">
    <property type="protein sequence ID" value="AAO90507"/>
    <property type="gene ID" value="CBU_0986"/>
</dbReference>
<dbReference type="GeneID" id="1208881"/>
<dbReference type="KEGG" id="cbu:CBU_0986"/>
<dbReference type="PATRIC" id="fig|227377.7.peg.982"/>
<dbReference type="eggNOG" id="COG0566">
    <property type="taxonomic scope" value="Bacteria"/>
</dbReference>
<dbReference type="HOGENOM" id="CLU_021322_0_1_6"/>
<dbReference type="OrthoDB" id="9785673at2"/>
<dbReference type="Proteomes" id="UP000002671">
    <property type="component" value="Chromosome"/>
</dbReference>
<dbReference type="GO" id="GO:0005829">
    <property type="term" value="C:cytosol"/>
    <property type="evidence" value="ECO:0000318"/>
    <property type="project" value="GO_Central"/>
</dbReference>
<dbReference type="GO" id="GO:0003723">
    <property type="term" value="F:RNA binding"/>
    <property type="evidence" value="ECO:0007669"/>
    <property type="project" value="InterPro"/>
</dbReference>
<dbReference type="GO" id="GO:0070039">
    <property type="term" value="F:rRNA (guanosine-2'-O-)-methyltransferase activity"/>
    <property type="evidence" value="ECO:0000318"/>
    <property type="project" value="GO_Central"/>
</dbReference>
<dbReference type="CDD" id="cd18103">
    <property type="entry name" value="SpoU-like_RlmB"/>
    <property type="match status" value="1"/>
</dbReference>
<dbReference type="FunFam" id="3.40.1280.10:FF:000008">
    <property type="entry name" value="Group 3 RNA methyltransferase TrmH"/>
    <property type="match status" value="1"/>
</dbReference>
<dbReference type="Gene3D" id="3.30.1330.30">
    <property type="match status" value="1"/>
</dbReference>
<dbReference type="Gene3D" id="3.40.1280.10">
    <property type="match status" value="1"/>
</dbReference>
<dbReference type="HAMAP" id="MF_01887">
    <property type="entry name" value="23SrRNA_methyltr_B"/>
    <property type="match status" value="1"/>
</dbReference>
<dbReference type="InterPro" id="IPR024915">
    <property type="entry name" value="23S_rRNA_MeTrfase_RlmB"/>
</dbReference>
<dbReference type="InterPro" id="IPR029028">
    <property type="entry name" value="Alpha/beta_knot_MTases"/>
</dbReference>
<dbReference type="InterPro" id="IPR029064">
    <property type="entry name" value="Ribosomal_eL30-like_sf"/>
</dbReference>
<dbReference type="InterPro" id="IPR004441">
    <property type="entry name" value="rRNA_MeTrfase_TrmH"/>
</dbReference>
<dbReference type="InterPro" id="IPR001537">
    <property type="entry name" value="SpoU_MeTrfase"/>
</dbReference>
<dbReference type="InterPro" id="IPR013123">
    <property type="entry name" value="SpoU_subst-bd"/>
</dbReference>
<dbReference type="InterPro" id="IPR029026">
    <property type="entry name" value="tRNA_m1G_MTases_N"/>
</dbReference>
<dbReference type="NCBIfam" id="TIGR00186">
    <property type="entry name" value="rRNA_methyl_3"/>
    <property type="match status" value="1"/>
</dbReference>
<dbReference type="PANTHER" id="PTHR46429">
    <property type="entry name" value="23S RRNA (GUANOSINE-2'-O-)-METHYLTRANSFERASE RLMB"/>
    <property type="match status" value="1"/>
</dbReference>
<dbReference type="PANTHER" id="PTHR46429:SF1">
    <property type="entry name" value="23S RRNA (GUANOSINE-2'-O-)-METHYLTRANSFERASE RLMB"/>
    <property type="match status" value="1"/>
</dbReference>
<dbReference type="Pfam" id="PF00588">
    <property type="entry name" value="SpoU_methylase"/>
    <property type="match status" value="1"/>
</dbReference>
<dbReference type="Pfam" id="PF08032">
    <property type="entry name" value="SpoU_sub_bind"/>
    <property type="match status" value="1"/>
</dbReference>
<dbReference type="SMART" id="SM00967">
    <property type="entry name" value="SpoU_sub_bind"/>
    <property type="match status" value="1"/>
</dbReference>
<dbReference type="SUPFAM" id="SSF75217">
    <property type="entry name" value="alpha/beta knot"/>
    <property type="match status" value="1"/>
</dbReference>
<dbReference type="SUPFAM" id="SSF55315">
    <property type="entry name" value="L30e-like"/>
    <property type="match status" value="1"/>
</dbReference>
<protein>
    <recommendedName>
        <fullName evidence="1">23S rRNA (guanosine-2'-O-)-methyltransferase RlmB</fullName>
        <ecNumber evidence="1">2.1.1.185</ecNumber>
    </recommendedName>
    <alternativeName>
        <fullName evidence="1">23S rRNA (guanosine2251 2'-O)-methyltransferase</fullName>
    </alternativeName>
    <alternativeName>
        <fullName evidence="1">23S rRNA Gm2251 2'-O-methyltransferase</fullName>
    </alternativeName>
</protein>
<keyword id="KW-0963">Cytoplasm</keyword>
<keyword id="KW-0489">Methyltransferase</keyword>
<keyword id="KW-1185">Reference proteome</keyword>
<keyword id="KW-0698">rRNA processing</keyword>
<keyword id="KW-0949">S-adenosyl-L-methionine</keyword>
<keyword id="KW-0808">Transferase</keyword>